<organism>
    <name type="scientific">Staphylococcus aureus (strain bovine RF122 / ET3-1)</name>
    <dbReference type="NCBI Taxonomy" id="273036"/>
    <lineage>
        <taxon>Bacteria</taxon>
        <taxon>Bacillati</taxon>
        <taxon>Bacillota</taxon>
        <taxon>Bacilli</taxon>
        <taxon>Bacillales</taxon>
        <taxon>Staphylococcaceae</taxon>
        <taxon>Staphylococcus</taxon>
    </lineage>
</organism>
<sequence length="228" mass="26858">MTHLLIVDDEQDIVDICQTYFEYEGYKVTTTTSGKEAISLLSNDIDIMVLDIMMPEVNGYDIVKEMKRQKLDIPFIYLTAKTQEHDTIYALTLGADDYVKKPFSPRELVLRINNLLTRMKKYHHQPVEQLSFDELTLINLSKVVTVNGHEVPMRIKEFELLWYLASRENEVISKSELLEKVWGYDYYEDANTVNVHIHRIREKLEKESFTTYTITTVWGLGYKFERSR</sequence>
<dbReference type="EMBL" id="AJ938182">
    <property type="protein sequence ID" value="CAI80343.1"/>
    <property type="molecule type" value="Genomic_DNA"/>
</dbReference>
<dbReference type="RefSeq" id="WP_000149344.1">
    <property type="nucleotide sequence ID" value="NC_007622.1"/>
</dbReference>
<dbReference type="SMR" id="Q2YSM5"/>
<dbReference type="KEGG" id="sab:SAB0655c"/>
<dbReference type="HOGENOM" id="CLU_000445_30_4_9"/>
<dbReference type="GO" id="GO:0005829">
    <property type="term" value="C:cytosol"/>
    <property type="evidence" value="ECO:0007669"/>
    <property type="project" value="TreeGrafter"/>
</dbReference>
<dbReference type="GO" id="GO:0032993">
    <property type="term" value="C:protein-DNA complex"/>
    <property type="evidence" value="ECO:0007669"/>
    <property type="project" value="TreeGrafter"/>
</dbReference>
<dbReference type="GO" id="GO:0000156">
    <property type="term" value="F:phosphorelay response regulator activity"/>
    <property type="evidence" value="ECO:0007669"/>
    <property type="project" value="TreeGrafter"/>
</dbReference>
<dbReference type="GO" id="GO:0000976">
    <property type="term" value="F:transcription cis-regulatory region binding"/>
    <property type="evidence" value="ECO:0007669"/>
    <property type="project" value="TreeGrafter"/>
</dbReference>
<dbReference type="GO" id="GO:0006355">
    <property type="term" value="P:regulation of DNA-templated transcription"/>
    <property type="evidence" value="ECO:0007669"/>
    <property type="project" value="InterPro"/>
</dbReference>
<dbReference type="CDD" id="cd17574">
    <property type="entry name" value="REC_OmpR"/>
    <property type="match status" value="1"/>
</dbReference>
<dbReference type="CDD" id="cd00383">
    <property type="entry name" value="trans_reg_C"/>
    <property type="match status" value="1"/>
</dbReference>
<dbReference type="FunFam" id="1.10.10.10:FF:000018">
    <property type="entry name" value="DNA-binding response regulator ResD"/>
    <property type="match status" value="1"/>
</dbReference>
<dbReference type="Gene3D" id="3.40.50.2300">
    <property type="match status" value="1"/>
</dbReference>
<dbReference type="Gene3D" id="6.10.250.690">
    <property type="match status" value="1"/>
</dbReference>
<dbReference type="Gene3D" id="1.10.10.10">
    <property type="entry name" value="Winged helix-like DNA-binding domain superfamily/Winged helix DNA-binding domain"/>
    <property type="match status" value="1"/>
</dbReference>
<dbReference type="InterPro" id="IPR011006">
    <property type="entry name" value="CheY-like_superfamily"/>
</dbReference>
<dbReference type="InterPro" id="IPR001867">
    <property type="entry name" value="OmpR/PhoB-type_DNA-bd"/>
</dbReference>
<dbReference type="InterPro" id="IPR001789">
    <property type="entry name" value="Sig_transdc_resp-reg_receiver"/>
</dbReference>
<dbReference type="InterPro" id="IPR039420">
    <property type="entry name" value="WalR-like"/>
</dbReference>
<dbReference type="InterPro" id="IPR036388">
    <property type="entry name" value="WH-like_DNA-bd_sf"/>
</dbReference>
<dbReference type="PANTHER" id="PTHR48111">
    <property type="entry name" value="REGULATOR OF RPOS"/>
    <property type="match status" value="1"/>
</dbReference>
<dbReference type="PANTHER" id="PTHR48111:SF2">
    <property type="entry name" value="RESPONSE REGULATOR SAER"/>
    <property type="match status" value="1"/>
</dbReference>
<dbReference type="Pfam" id="PF00072">
    <property type="entry name" value="Response_reg"/>
    <property type="match status" value="1"/>
</dbReference>
<dbReference type="Pfam" id="PF00486">
    <property type="entry name" value="Trans_reg_C"/>
    <property type="match status" value="1"/>
</dbReference>
<dbReference type="SMART" id="SM00448">
    <property type="entry name" value="REC"/>
    <property type="match status" value="1"/>
</dbReference>
<dbReference type="SMART" id="SM00862">
    <property type="entry name" value="Trans_reg_C"/>
    <property type="match status" value="1"/>
</dbReference>
<dbReference type="SUPFAM" id="SSF52172">
    <property type="entry name" value="CheY-like"/>
    <property type="match status" value="1"/>
</dbReference>
<dbReference type="PROSITE" id="PS51755">
    <property type="entry name" value="OMPR_PHOB"/>
    <property type="match status" value="1"/>
</dbReference>
<dbReference type="PROSITE" id="PS50110">
    <property type="entry name" value="RESPONSE_REGULATORY"/>
    <property type="match status" value="1"/>
</dbReference>
<accession>Q2YSM5</accession>
<keyword id="KW-0963">Cytoplasm</keyword>
<keyword id="KW-0238">DNA-binding</keyword>
<keyword id="KW-0597">Phosphoprotein</keyword>
<keyword id="KW-0716">Sensory transduction</keyword>
<keyword id="KW-0804">Transcription</keyword>
<keyword id="KW-0805">Transcription regulation</keyword>
<keyword id="KW-0902">Two-component regulatory system</keyword>
<keyword id="KW-0843">Virulence</keyword>
<protein>
    <recommendedName>
        <fullName>Response regulator SaeR</fullName>
    </recommendedName>
    <alternativeName>
        <fullName>Staphylococcus exoprotein expression protein R</fullName>
    </alternativeName>
</protein>
<comment type="function">
    <text evidence="1">Member of the two-component regulatory system SaeR/SaeS involved in the regulation of staphylococcal virulence factors in a strain-dependent fashion. Probably functions as a transcriptional regulator via a specific DNA-binding domain, recognizing motifs near the promoter sequences of target genes (By similarity).</text>
</comment>
<comment type="subcellular location">
    <subcellularLocation>
        <location evidence="1">Cytoplasm</location>
    </subcellularLocation>
</comment>
<comment type="PTM">
    <text evidence="1">Phosphorylated by SaeS.</text>
</comment>
<reference key="1">
    <citation type="journal article" date="2007" name="PLoS ONE">
        <title>Molecular correlates of host specialization in Staphylococcus aureus.</title>
        <authorList>
            <person name="Herron-Olson L."/>
            <person name="Fitzgerald J.R."/>
            <person name="Musser J.M."/>
            <person name="Kapur V."/>
        </authorList>
    </citation>
    <scope>NUCLEOTIDE SEQUENCE [LARGE SCALE GENOMIC DNA]</scope>
    <source>
        <strain>bovine RF122 / ET3-1</strain>
    </source>
</reference>
<name>SAER_STAAB</name>
<proteinExistence type="inferred from homology"/>
<feature type="chain" id="PRO_0000295918" description="Response regulator SaeR">
    <location>
        <begin position="1"/>
        <end position="228"/>
    </location>
</feature>
<feature type="domain" description="Response regulatory" evidence="2">
    <location>
        <begin position="3"/>
        <end position="116"/>
    </location>
</feature>
<feature type="DNA-binding region" description="OmpR/PhoB-type" evidence="3">
    <location>
        <begin position="127"/>
        <end position="226"/>
    </location>
</feature>
<feature type="modified residue" description="4-aspartylphosphate" evidence="2">
    <location>
        <position position="51"/>
    </location>
</feature>
<gene>
    <name type="primary">saeR</name>
    <name type="ordered locus">SAB0655c</name>
</gene>
<evidence type="ECO:0000250" key="1"/>
<evidence type="ECO:0000255" key="2">
    <source>
        <dbReference type="PROSITE-ProRule" id="PRU00169"/>
    </source>
</evidence>
<evidence type="ECO:0000255" key="3">
    <source>
        <dbReference type="PROSITE-ProRule" id="PRU01091"/>
    </source>
</evidence>